<reference key="1">
    <citation type="journal article" date="2003" name="Proc. Natl. Acad. Sci. U.S.A.">
        <title>Complete genome sequence of the Q-fever pathogen, Coxiella burnetii.</title>
        <authorList>
            <person name="Seshadri R."/>
            <person name="Paulsen I.T."/>
            <person name="Eisen J.A."/>
            <person name="Read T.D."/>
            <person name="Nelson K.E."/>
            <person name="Nelson W.C."/>
            <person name="Ward N.L."/>
            <person name="Tettelin H."/>
            <person name="Davidsen T.M."/>
            <person name="Beanan M.J."/>
            <person name="DeBoy R.T."/>
            <person name="Daugherty S.C."/>
            <person name="Brinkac L.M."/>
            <person name="Madupu R."/>
            <person name="Dodson R.J."/>
            <person name="Khouri H.M."/>
            <person name="Lee K.H."/>
            <person name="Carty H.A."/>
            <person name="Scanlan D."/>
            <person name="Heinzen R.A."/>
            <person name="Thompson H.A."/>
            <person name="Samuel J.E."/>
            <person name="Fraser C.M."/>
            <person name="Heidelberg J.F."/>
        </authorList>
    </citation>
    <scope>NUCLEOTIDE SEQUENCE [LARGE SCALE GENOMIC DNA]</scope>
    <source>
        <strain>RSA 493 / Nine Mile phase I</strain>
    </source>
</reference>
<evidence type="ECO:0000255" key="1">
    <source>
        <dbReference type="HAMAP-Rule" id="MF_00549"/>
    </source>
</evidence>
<evidence type="ECO:0000305" key="2"/>
<keyword id="KW-0456">Lyase</keyword>
<keyword id="KW-1185">Reference proteome</keyword>
<dbReference type="EC" id="4.2.3.3" evidence="1"/>
<dbReference type="EMBL" id="AE016828">
    <property type="protein sequence ID" value="AAO90387.2"/>
    <property type="status" value="ALT_INIT"/>
    <property type="molecule type" value="Genomic_DNA"/>
</dbReference>
<dbReference type="RefSeq" id="NP_819873.2">
    <property type="nucleotide sequence ID" value="NC_002971.3"/>
</dbReference>
<dbReference type="SMR" id="Q83D86"/>
<dbReference type="STRING" id="227377.CBU_0853"/>
<dbReference type="EnsemblBacteria" id="AAO90387">
    <property type="protein sequence ID" value="AAO90387"/>
    <property type="gene ID" value="CBU_0853"/>
</dbReference>
<dbReference type="GeneID" id="1208746"/>
<dbReference type="KEGG" id="cbu:CBU_0853"/>
<dbReference type="PATRIC" id="fig|227377.7.peg.838"/>
<dbReference type="eggNOG" id="COG1803">
    <property type="taxonomic scope" value="Bacteria"/>
</dbReference>
<dbReference type="HOGENOM" id="CLU_120420_0_1_6"/>
<dbReference type="OrthoDB" id="9787147at2"/>
<dbReference type="Proteomes" id="UP000002671">
    <property type="component" value="Chromosome"/>
</dbReference>
<dbReference type="GO" id="GO:0005829">
    <property type="term" value="C:cytosol"/>
    <property type="evidence" value="ECO:0000318"/>
    <property type="project" value="GO_Central"/>
</dbReference>
<dbReference type="GO" id="GO:0008929">
    <property type="term" value="F:methylglyoxal synthase activity"/>
    <property type="evidence" value="ECO:0000318"/>
    <property type="project" value="GO_Central"/>
</dbReference>
<dbReference type="GO" id="GO:0019242">
    <property type="term" value="P:methylglyoxal biosynthetic process"/>
    <property type="evidence" value="ECO:0000318"/>
    <property type="project" value="GO_Central"/>
</dbReference>
<dbReference type="CDD" id="cd01422">
    <property type="entry name" value="MGS"/>
    <property type="match status" value="1"/>
</dbReference>
<dbReference type="FunFam" id="3.40.50.1380:FF:000006">
    <property type="entry name" value="Methylglyoxal synthase"/>
    <property type="match status" value="1"/>
</dbReference>
<dbReference type="Gene3D" id="3.40.50.1380">
    <property type="entry name" value="Methylglyoxal synthase-like domain"/>
    <property type="match status" value="1"/>
</dbReference>
<dbReference type="HAMAP" id="MF_00549">
    <property type="entry name" value="Methylglyoxal_synth"/>
    <property type="match status" value="1"/>
</dbReference>
<dbReference type="InterPro" id="IPR004363">
    <property type="entry name" value="Methylgl_synth"/>
</dbReference>
<dbReference type="InterPro" id="IPR018148">
    <property type="entry name" value="Methylglyoxal_synth_AS"/>
</dbReference>
<dbReference type="InterPro" id="IPR011607">
    <property type="entry name" value="MGS-like_dom"/>
</dbReference>
<dbReference type="InterPro" id="IPR036914">
    <property type="entry name" value="MGS-like_dom_sf"/>
</dbReference>
<dbReference type="NCBIfam" id="TIGR00160">
    <property type="entry name" value="MGSA"/>
    <property type="match status" value="1"/>
</dbReference>
<dbReference type="NCBIfam" id="NF003559">
    <property type="entry name" value="PRK05234.1"/>
    <property type="match status" value="1"/>
</dbReference>
<dbReference type="PANTHER" id="PTHR30492">
    <property type="entry name" value="METHYLGLYOXAL SYNTHASE"/>
    <property type="match status" value="1"/>
</dbReference>
<dbReference type="PANTHER" id="PTHR30492:SF0">
    <property type="entry name" value="METHYLGLYOXAL SYNTHASE"/>
    <property type="match status" value="1"/>
</dbReference>
<dbReference type="Pfam" id="PF02142">
    <property type="entry name" value="MGS"/>
    <property type="match status" value="1"/>
</dbReference>
<dbReference type="PIRSF" id="PIRSF006614">
    <property type="entry name" value="Methylglyox_syn"/>
    <property type="match status" value="1"/>
</dbReference>
<dbReference type="SMART" id="SM00851">
    <property type="entry name" value="MGS"/>
    <property type="match status" value="1"/>
</dbReference>
<dbReference type="SUPFAM" id="SSF52335">
    <property type="entry name" value="Methylglyoxal synthase-like"/>
    <property type="match status" value="1"/>
</dbReference>
<dbReference type="PROSITE" id="PS01335">
    <property type="entry name" value="METHYLGLYOXAL_SYNTH"/>
    <property type="match status" value="1"/>
</dbReference>
<dbReference type="PROSITE" id="PS51855">
    <property type="entry name" value="MGS"/>
    <property type="match status" value="1"/>
</dbReference>
<sequence>MTVKKIALVAHDRMKKELIEWIKKHQNLLKHHELYATGSTGQAIEKTLNVTVTKMESGPLGGDLQLGAKIVNKEIDILIFFWDPLEAQPHDPDVRALLRIAVVWNLPVACNASTADYLLTSPLFDSDYHPETPDYEAYRNRII</sequence>
<proteinExistence type="inferred from homology"/>
<feature type="chain" id="PRO_0000178624" description="Methylglyoxal synthase">
    <location>
        <begin position="1"/>
        <end position="143"/>
    </location>
</feature>
<feature type="domain" description="MGS-like" evidence="1">
    <location>
        <begin position="1"/>
        <end position="143"/>
    </location>
</feature>
<feature type="active site" description="Proton donor/acceptor" evidence="1">
    <location>
        <position position="63"/>
    </location>
</feature>
<feature type="binding site" evidence="1">
    <location>
        <position position="11"/>
    </location>
    <ligand>
        <name>substrate</name>
    </ligand>
</feature>
<feature type="binding site" evidence="1">
    <location>
        <position position="15"/>
    </location>
    <ligand>
        <name>substrate</name>
    </ligand>
</feature>
<feature type="binding site" evidence="1">
    <location>
        <begin position="37"/>
        <end position="40"/>
    </location>
    <ligand>
        <name>substrate</name>
    </ligand>
</feature>
<feature type="binding site" evidence="1">
    <location>
        <begin position="57"/>
        <end position="58"/>
    </location>
    <ligand>
        <name>substrate</name>
    </ligand>
</feature>
<feature type="binding site" evidence="1">
    <location>
        <position position="90"/>
    </location>
    <ligand>
        <name>substrate</name>
    </ligand>
</feature>
<organism>
    <name type="scientific">Coxiella burnetii (strain RSA 493 / Nine Mile phase I)</name>
    <dbReference type="NCBI Taxonomy" id="227377"/>
    <lineage>
        <taxon>Bacteria</taxon>
        <taxon>Pseudomonadati</taxon>
        <taxon>Pseudomonadota</taxon>
        <taxon>Gammaproteobacteria</taxon>
        <taxon>Legionellales</taxon>
        <taxon>Coxiellaceae</taxon>
        <taxon>Coxiella</taxon>
    </lineage>
</organism>
<name>MGSA_COXBU</name>
<comment type="function">
    <text evidence="1">Catalyzes the formation of methylglyoxal from dihydroxyacetone phosphate.</text>
</comment>
<comment type="catalytic activity">
    <reaction evidence="1">
        <text>dihydroxyacetone phosphate = methylglyoxal + phosphate</text>
        <dbReference type="Rhea" id="RHEA:17937"/>
        <dbReference type="ChEBI" id="CHEBI:17158"/>
        <dbReference type="ChEBI" id="CHEBI:43474"/>
        <dbReference type="ChEBI" id="CHEBI:57642"/>
        <dbReference type="EC" id="4.2.3.3"/>
    </reaction>
</comment>
<comment type="similarity">
    <text evidence="1">Belongs to the methylglyoxal synthase family.</text>
</comment>
<comment type="sequence caution" evidence="2">
    <conflict type="erroneous initiation">
        <sequence resource="EMBL-CDS" id="AAO90387"/>
    </conflict>
</comment>
<protein>
    <recommendedName>
        <fullName evidence="1">Methylglyoxal synthase</fullName>
        <shortName evidence="1">MGS</shortName>
        <ecNumber evidence="1">4.2.3.3</ecNumber>
    </recommendedName>
</protein>
<accession>Q83D86</accession>
<gene>
    <name evidence="1" type="primary">mgsA</name>
    <name type="ordered locus">CBU_0853</name>
</gene>